<comment type="similarity">
    <text evidence="2">To Synechocystis PCC 6803 sll0335 and to M.tuberculosis Rv2567.</text>
</comment>
<protein>
    <recommendedName>
        <fullName>Uncharacterized protein MT2484</fullName>
    </recommendedName>
</protein>
<gene>
    <name type="ordered locus">MT2484</name>
</gene>
<dbReference type="EMBL" id="AE000516">
    <property type="protein sequence ID" value="AAK46780.1"/>
    <property type="molecule type" value="Genomic_DNA"/>
</dbReference>
<dbReference type="PIR" id="F70684">
    <property type="entry name" value="F70684"/>
</dbReference>
<dbReference type="RefSeq" id="WP_003412363.1">
    <property type="nucleotide sequence ID" value="NZ_KK341227.1"/>
</dbReference>
<dbReference type="SMR" id="P9WLA8"/>
<dbReference type="KEGG" id="mtc:MT2484"/>
<dbReference type="PATRIC" id="fig|83331.31.peg.2677"/>
<dbReference type="HOGENOM" id="CLU_017048_2_1_11"/>
<dbReference type="Proteomes" id="UP000001020">
    <property type="component" value="Chromosome"/>
</dbReference>
<dbReference type="Gene3D" id="3.30.1490.270">
    <property type="match status" value="1"/>
</dbReference>
<dbReference type="Gene3D" id="3.40.50.11290">
    <property type="match status" value="1"/>
</dbReference>
<dbReference type="InterPro" id="IPR051680">
    <property type="entry name" value="ATP-dep_Glu-Cys_Ligase-2"/>
</dbReference>
<dbReference type="InterPro" id="IPR007302">
    <property type="entry name" value="CP_ATPgrasp"/>
</dbReference>
<dbReference type="InterPro" id="IPR016450">
    <property type="entry name" value="UCP005522"/>
</dbReference>
<dbReference type="PANTHER" id="PTHR34595">
    <property type="entry name" value="BLR5612 PROTEIN"/>
    <property type="match status" value="1"/>
</dbReference>
<dbReference type="PANTHER" id="PTHR34595:SF7">
    <property type="entry name" value="SLL1039 PROTEIN"/>
    <property type="match status" value="1"/>
</dbReference>
<dbReference type="Pfam" id="PF04174">
    <property type="entry name" value="CP_ATPgrasp_1"/>
    <property type="match status" value="1"/>
</dbReference>
<dbReference type="PIRSF" id="PIRSF005522">
    <property type="entry name" value="UCP005522"/>
    <property type="match status" value="1"/>
</dbReference>
<dbReference type="SUPFAM" id="SSF56059">
    <property type="entry name" value="Glutathione synthetase ATP-binding domain-like"/>
    <property type="match status" value="1"/>
</dbReference>
<proteinExistence type="predicted"/>
<accession>P9WLA8</accession>
<accession>L0TC95</accession>
<accession>P65001</accession>
<accession>P71732</accession>
<organism>
    <name type="scientific">Mycobacterium tuberculosis (strain CDC 1551 / Oshkosh)</name>
    <dbReference type="NCBI Taxonomy" id="83331"/>
    <lineage>
        <taxon>Bacteria</taxon>
        <taxon>Bacillati</taxon>
        <taxon>Actinomycetota</taxon>
        <taxon>Actinomycetes</taxon>
        <taxon>Mycobacteriales</taxon>
        <taxon>Mycobacteriaceae</taxon>
        <taxon>Mycobacterium</taxon>
        <taxon>Mycobacterium tuberculosis complex</taxon>
    </lineage>
</organism>
<reference key="1">
    <citation type="journal article" date="2002" name="J. Bacteriol.">
        <title>Whole-genome comparison of Mycobacterium tuberculosis clinical and laboratory strains.</title>
        <authorList>
            <person name="Fleischmann R.D."/>
            <person name="Alland D."/>
            <person name="Eisen J.A."/>
            <person name="Carpenter L."/>
            <person name="White O."/>
            <person name="Peterson J.D."/>
            <person name="DeBoy R.T."/>
            <person name="Dodson R.J."/>
            <person name="Gwinn M.L."/>
            <person name="Haft D.H."/>
            <person name="Hickey E.K."/>
            <person name="Kolonay J.F."/>
            <person name="Nelson W.C."/>
            <person name="Umayam L.A."/>
            <person name="Ermolaeva M.D."/>
            <person name="Salzberg S.L."/>
            <person name="Delcher A."/>
            <person name="Utterback T.R."/>
            <person name="Weidman J.F."/>
            <person name="Khouri H.M."/>
            <person name="Gill J."/>
            <person name="Mikula A."/>
            <person name="Bishai W."/>
            <person name="Jacobs W.R. Jr."/>
            <person name="Venter J.C."/>
            <person name="Fraser C.M."/>
        </authorList>
    </citation>
    <scope>NUCLEOTIDE SEQUENCE [LARGE SCALE GENOMIC DNA]</scope>
    <source>
        <strain>CDC 1551 / Oshkosh</strain>
    </source>
</reference>
<evidence type="ECO:0000256" key="1">
    <source>
        <dbReference type="SAM" id="MobiDB-lite"/>
    </source>
</evidence>
<evidence type="ECO:0000305" key="2"/>
<name>Y2411_MYCTO</name>
<sequence>MRRVSLPNQLNETRRRSPTRGERIFGGYNTSDVYAMAFDEMFDAQGIVRGPYKGIYAELAPSDASELKARADALGRAFIDQGITFSLSGQERPFPLDLVPRVISAPEWTRLERGITQRVKALECYLDDIYGDQEILRDGVIPRRLVTSCEHFHRQAVGIVPPNGVRIHVAGIDLIRDHRGDFRVLEDNLRSPSGVSYVMENRRTMARVFPNLFATHRVRAVDDYASHLLRALRNSAATNEADPTVVVLTPGVYNSAYFEHSLLARQMGVELVEGRDLFCRDNQVYMRTTEGERQVDVIYRRIDDAFLDPLQFRADSVLGVAGLVNAARAGNVVLSSAIGNGVGDDKLVYTYVPTMIEYYLHEKPLLANVETLRCWLDDEREEVLDRIRELVLKPVEGSGGYGIVFGPEASQAELAAVSQKIRDDPRSWIAQPMMELSTVPTRIEGTLAPRYVDLRPFAVNDGNEVWVLPGGLTRVALVEGSRVVNSSQGGGSKDTWVLAPRASAAARELGAAQIVRSLPQPLCDPTVDASGYEPHDQQPQQQQQQQQQAFH</sequence>
<keyword id="KW-1185">Reference proteome</keyword>
<feature type="chain" id="PRO_0000427511" description="Uncharacterized protein MT2484">
    <location>
        <begin position="1"/>
        <end position="551"/>
    </location>
</feature>
<feature type="region of interest" description="Disordered" evidence="1">
    <location>
        <begin position="1"/>
        <end position="22"/>
    </location>
</feature>
<feature type="region of interest" description="Disordered" evidence="1">
    <location>
        <begin position="523"/>
        <end position="551"/>
    </location>
</feature>
<feature type="compositionally biased region" description="Polar residues" evidence="1">
    <location>
        <begin position="1"/>
        <end position="11"/>
    </location>
</feature>
<feature type="compositionally biased region" description="Basic and acidic residues" evidence="1">
    <location>
        <begin position="12"/>
        <end position="22"/>
    </location>
</feature>
<feature type="compositionally biased region" description="Low complexity" evidence="1">
    <location>
        <begin position="537"/>
        <end position="551"/>
    </location>
</feature>